<keyword id="KW-0256">Endoplasmic reticulum</keyword>
<keyword id="KW-0349">Heme</keyword>
<keyword id="KW-0408">Iron</keyword>
<keyword id="KW-0472">Membrane</keyword>
<keyword id="KW-0479">Metal-binding</keyword>
<keyword id="KW-0492">Microsome</keyword>
<keyword id="KW-0503">Monooxygenase</keyword>
<keyword id="KW-0560">Oxidoreductase</keyword>
<keyword id="KW-1185">Reference proteome</keyword>
<name>CP255_MOUSE</name>
<gene>
    <name evidence="10" type="primary">Cyp2c55</name>
    <name evidence="3" type="synonym">Cyp2c-55</name>
</gene>
<comment type="function">
    <text evidence="5">Metabolizes arachidonic acid mainly to 19-hydroxyeicosatetraenoic acid (HETE).</text>
</comment>
<comment type="catalytic activity">
    <reaction evidence="5">
        <text>an organic molecule + reduced [NADPH--hemoprotein reductase] + O2 = an alcohol + oxidized [NADPH--hemoprotein reductase] + H2O + H(+)</text>
        <dbReference type="Rhea" id="RHEA:17149"/>
        <dbReference type="Rhea" id="RHEA-COMP:11964"/>
        <dbReference type="Rhea" id="RHEA-COMP:11965"/>
        <dbReference type="ChEBI" id="CHEBI:15377"/>
        <dbReference type="ChEBI" id="CHEBI:15378"/>
        <dbReference type="ChEBI" id="CHEBI:15379"/>
        <dbReference type="ChEBI" id="CHEBI:30879"/>
        <dbReference type="ChEBI" id="CHEBI:57618"/>
        <dbReference type="ChEBI" id="CHEBI:58210"/>
        <dbReference type="ChEBI" id="CHEBI:142491"/>
        <dbReference type="EC" id="1.14.14.1"/>
    </reaction>
</comment>
<comment type="cofactor">
    <cofactor evidence="1">
        <name>heme</name>
        <dbReference type="ChEBI" id="CHEBI:30413"/>
    </cofactor>
</comment>
<comment type="subcellular location">
    <subcellularLocation>
        <location>Endoplasmic reticulum membrane</location>
        <topology>Peripheral membrane protein</topology>
    </subcellularLocation>
    <subcellularLocation>
        <location>Microsome membrane</location>
        <topology>Peripheral membrane protein</topology>
    </subcellularLocation>
</comment>
<comment type="tissue specificity">
    <text evidence="5">Highest level in colon. Low levels in liver and small intestine.</text>
</comment>
<comment type="induction">
    <text evidence="6">P450 can be induced to high levels in liver and other tissues by various foreign compounds, including drugs, pesticides, and carcinogens.</text>
</comment>
<comment type="similarity">
    <text evidence="4">Belongs to the cytochrome P450 family.</text>
</comment>
<feature type="chain" id="PRO_0000282959" description="Cytochrome P450 2C55">
    <location>
        <begin position="1"/>
        <end position="490"/>
    </location>
</feature>
<feature type="binding site" description="axial binding residue" evidence="2">
    <location>
        <position position="435"/>
    </location>
    <ligand>
        <name>heme</name>
        <dbReference type="ChEBI" id="CHEBI:30413"/>
    </ligand>
    <ligandPart>
        <name>Fe</name>
        <dbReference type="ChEBI" id="CHEBI:18248"/>
    </ligandPart>
</feature>
<protein>
    <recommendedName>
        <fullName>Cytochrome P450 2C55</fullName>
        <ecNumber evidence="5">1.14.14.1</ecNumber>
    </recommendedName>
    <alternativeName>
        <fullName>CYPIIC55</fullName>
    </alternativeName>
</protein>
<proteinExistence type="evidence at protein level"/>
<evidence type="ECO:0000250" key="1"/>
<evidence type="ECO:0000250" key="2">
    <source>
        <dbReference type="UniProtKB" id="P10632"/>
    </source>
</evidence>
<evidence type="ECO:0000250" key="3">
    <source>
        <dbReference type="UniProtKB" id="P33273"/>
    </source>
</evidence>
<evidence type="ECO:0000255" key="4"/>
<evidence type="ECO:0000269" key="5">
    <source>
    </source>
</evidence>
<evidence type="ECO:0000305" key="6"/>
<evidence type="ECO:0000312" key="7">
    <source>
        <dbReference type="EMBL" id="AAH10824.1"/>
    </source>
</evidence>
<evidence type="ECO:0000312" key="8">
    <source>
        <dbReference type="EMBL" id="AAO52738.1"/>
    </source>
</evidence>
<evidence type="ECO:0000312" key="9">
    <source>
        <dbReference type="EMBL" id="BAB25759.1"/>
    </source>
</evidence>
<evidence type="ECO:0000312" key="10">
    <source>
        <dbReference type="MGI" id="MGI:1919332"/>
    </source>
</evidence>
<dbReference type="EC" id="1.14.14.1" evidence="5"/>
<dbReference type="EMBL" id="AY206875">
    <property type="protein sequence ID" value="AAO52738.1"/>
    <property type="molecule type" value="mRNA"/>
</dbReference>
<dbReference type="EMBL" id="AK008580">
    <property type="protein sequence ID" value="BAB25759.1"/>
    <property type="molecule type" value="mRNA"/>
</dbReference>
<dbReference type="EMBL" id="BC010824">
    <property type="protein sequence ID" value="AAH10824.1"/>
    <property type="molecule type" value="mRNA"/>
</dbReference>
<dbReference type="CCDS" id="CCDS29790.1"/>
<dbReference type="RefSeq" id="NP_082365.1">
    <property type="nucleotide sequence ID" value="NM_028089.3"/>
</dbReference>
<dbReference type="SMR" id="Q9D816"/>
<dbReference type="FunCoup" id="Q9D816">
    <property type="interactions" value="933"/>
</dbReference>
<dbReference type="STRING" id="10090.ENSMUSP00000025966"/>
<dbReference type="GlyGen" id="Q9D816">
    <property type="glycosylation" value="1 site"/>
</dbReference>
<dbReference type="iPTMnet" id="Q9D816"/>
<dbReference type="PhosphoSitePlus" id="Q9D816"/>
<dbReference type="jPOST" id="Q9D816"/>
<dbReference type="PaxDb" id="10090-ENSMUSP00000025966"/>
<dbReference type="PeptideAtlas" id="Q9D816"/>
<dbReference type="ProteomicsDB" id="284109"/>
<dbReference type="DNASU" id="72082"/>
<dbReference type="Ensembl" id="ENSMUST00000025966.5">
    <property type="protein sequence ID" value="ENSMUSP00000025966.5"/>
    <property type="gene ID" value="ENSMUSG00000025002.6"/>
</dbReference>
<dbReference type="GeneID" id="72082"/>
<dbReference type="KEGG" id="mmu:72082"/>
<dbReference type="UCSC" id="uc008hju.1">
    <property type="organism name" value="mouse"/>
</dbReference>
<dbReference type="AGR" id="MGI:1919332"/>
<dbReference type="CTD" id="72082"/>
<dbReference type="MGI" id="MGI:1919332">
    <property type="gene designation" value="Cyp2c55"/>
</dbReference>
<dbReference type="VEuPathDB" id="HostDB:ENSMUSG00000025002"/>
<dbReference type="eggNOG" id="KOG0156">
    <property type="taxonomic scope" value="Eukaryota"/>
</dbReference>
<dbReference type="GeneTree" id="ENSGT00940000162913"/>
<dbReference type="HOGENOM" id="CLU_001570_22_3_1"/>
<dbReference type="InParanoid" id="Q9D816"/>
<dbReference type="OMA" id="HQAPKSH"/>
<dbReference type="OrthoDB" id="1103324at2759"/>
<dbReference type="PhylomeDB" id="Q9D816"/>
<dbReference type="TreeFam" id="TF352043"/>
<dbReference type="BioGRID-ORCS" id="72082">
    <property type="hits" value="2 hits in 77 CRISPR screens"/>
</dbReference>
<dbReference type="PRO" id="PR:Q9D816"/>
<dbReference type="Proteomes" id="UP000000589">
    <property type="component" value="Chromosome 19"/>
</dbReference>
<dbReference type="RNAct" id="Q9D816">
    <property type="molecule type" value="protein"/>
</dbReference>
<dbReference type="Bgee" id="ENSMUSG00000025002">
    <property type="expression patterns" value="Expressed in right colon and 24 other cell types or tissues"/>
</dbReference>
<dbReference type="GO" id="GO:0005789">
    <property type="term" value="C:endoplasmic reticulum membrane"/>
    <property type="evidence" value="ECO:0007669"/>
    <property type="project" value="UniProtKB-SubCell"/>
</dbReference>
<dbReference type="GO" id="GO:0005886">
    <property type="term" value="C:plasma membrane"/>
    <property type="evidence" value="ECO:0007669"/>
    <property type="project" value="Ensembl"/>
</dbReference>
<dbReference type="GO" id="GO:0008392">
    <property type="term" value="F:arachidonate epoxygenase activity"/>
    <property type="evidence" value="ECO:0000314"/>
    <property type="project" value="MGI"/>
</dbReference>
<dbReference type="GO" id="GO:0020037">
    <property type="term" value="F:heme binding"/>
    <property type="evidence" value="ECO:0007669"/>
    <property type="project" value="InterPro"/>
</dbReference>
<dbReference type="GO" id="GO:0005506">
    <property type="term" value="F:iron ion binding"/>
    <property type="evidence" value="ECO:0007669"/>
    <property type="project" value="InterPro"/>
</dbReference>
<dbReference type="GO" id="GO:0071614">
    <property type="term" value="F:linoleic acid epoxygenase activity"/>
    <property type="evidence" value="ECO:0000314"/>
    <property type="project" value="MGI"/>
</dbReference>
<dbReference type="GO" id="GO:0016712">
    <property type="term" value="F:oxidoreductase activity, acting on paired donors, with incorporation or reduction of molecular oxygen, reduced flavin or flavoprotein as one donor, and incorporation of one atom of oxygen"/>
    <property type="evidence" value="ECO:0007669"/>
    <property type="project" value="UniProtKB-EC"/>
</dbReference>
<dbReference type="GO" id="GO:0008401">
    <property type="term" value="F:retinoic acid 4-hydroxylase activity"/>
    <property type="evidence" value="ECO:0007669"/>
    <property type="project" value="Ensembl"/>
</dbReference>
<dbReference type="GO" id="GO:0019369">
    <property type="term" value="P:arachidonate metabolic process"/>
    <property type="evidence" value="ECO:0000314"/>
    <property type="project" value="MGI"/>
</dbReference>
<dbReference type="GO" id="GO:0043651">
    <property type="term" value="P:linoleic acid metabolic process"/>
    <property type="evidence" value="ECO:0000314"/>
    <property type="project" value="MGI"/>
</dbReference>
<dbReference type="GO" id="GO:0042573">
    <property type="term" value="P:retinoic acid metabolic process"/>
    <property type="evidence" value="ECO:0007669"/>
    <property type="project" value="Ensembl"/>
</dbReference>
<dbReference type="CDD" id="cd20665">
    <property type="entry name" value="CYP2C-like"/>
    <property type="match status" value="1"/>
</dbReference>
<dbReference type="FunFam" id="1.10.630.10:FF:000299">
    <property type="entry name" value="Cytochrome P450 2C9"/>
    <property type="match status" value="1"/>
</dbReference>
<dbReference type="Gene3D" id="1.10.630.10">
    <property type="entry name" value="Cytochrome P450"/>
    <property type="match status" value="1"/>
</dbReference>
<dbReference type="InterPro" id="IPR001128">
    <property type="entry name" value="Cyt_P450"/>
</dbReference>
<dbReference type="InterPro" id="IPR017972">
    <property type="entry name" value="Cyt_P450_CS"/>
</dbReference>
<dbReference type="InterPro" id="IPR002401">
    <property type="entry name" value="Cyt_P450_E_grp-I"/>
</dbReference>
<dbReference type="InterPro" id="IPR036396">
    <property type="entry name" value="Cyt_P450_sf"/>
</dbReference>
<dbReference type="InterPro" id="IPR050182">
    <property type="entry name" value="Cytochrome_P450_fam2"/>
</dbReference>
<dbReference type="PANTHER" id="PTHR24300:SF423">
    <property type="entry name" value="CYTOCHROME P450 2C18"/>
    <property type="match status" value="1"/>
</dbReference>
<dbReference type="PANTHER" id="PTHR24300">
    <property type="entry name" value="CYTOCHROME P450 508A4-RELATED"/>
    <property type="match status" value="1"/>
</dbReference>
<dbReference type="Pfam" id="PF00067">
    <property type="entry name" value="p450"/>
    <property type="match status" value="1"/>
</dbReference>
<dbReference type="PRINTS" id="PR00463">
    <property type="entry name" value="EP450I"/>
</dbReference>
<dbReference type="PRINTS" id="PR00385">
    <property type="entry name" value="P450"/>
</dbReference>
<dbReference type="SUPFAM" id="SSF48264">
    <property type="entry name" value="Cytochrome P450"/>
    <property type="match status" value="1"/>
</dbReference>
<dbReference type="PROSITE" id="PS00086">
    <property type="entry name" value="CYTOCHROME_P450"/>
    <property type="match status" value="1"/>
</dbReference>
<sequence>MDPVLVLVLTLSCLLLLSLWRQNSGRGKLPPGPTPFPIIGNILQIDIKNISKSFNYFSKVYGPVFTLYFGSKPTVVVHGYEAVKEALDDLGEEFSGRGSFQIFERINNDLGVIFSNGTKWKELRRFSIMTLRSFGMGKRSIEDRIQEEASCLVEELRKANGSLCDPTFILSCAPSNVICSVIFHNRFDYKDEKFLNLMERLNENFKILNSPWMQVYNALPTLINYLPGSHNKVIKNFTEIKSYILGRVKEHQETLDMDNPRDFIDCFLIKMEQEKHNPHSEFTIESLMATVTDIFVAGTETTNITLRYGLLLLLKHTEVTAKVQAEIDHVIGRHRSPCMQDRTRMPYTDAMVHEIQRYIDLIPNNVPHAATCNVRFRSYFIPKGTELVTSLTSVLHDDKEFPNPEVFDPGHFLDENGNFKKSDYFMPFSIGKRMCVGEALARTELFLILTTILQNFNLKSLVDTKDIDTTPVANTFGRVPPSYQLYFIPR</sequence>
<reference key="1">
    <citation type="journal article" date="2004" name="Mol. Pharmacol.">
        <title>Cloning, expression, and characterization of three new mouse cytochrome p450 enzymes and partial characterization of their fatty acid oxidation activities.</title>
        <authorList>
            <person name="Wang H."/>
            <person name="Zhao Y."/>
            <person name="Bradbury J.A."/>
            <person name="Graves J.P."/>
            <person name="Foley J."/>
            <person name="Blaisdell J.A."/>
            <person name="Goldstein J.A."/>
            <person name="Zeldin D.C."/>
        </authorList>
    </citation>
    <scope>NUCLEOTIDE SEQUENCE [MRNA]</scope>
    <scope>FUNCTION</scope>
    <scope>CATALYTIC ACTIVITY</scope>
    <scope>TISSUE SPECIFICITY</scope>
    <source>
        <strain evidence="8">C57BL/6J</strain>
        <tissue evidence="5">Colon</tissue>
    </source>
</reference>
<reference key="2">
    <citation type="journal article" date="2005" name="Science">
        <title>The transcriptional landscape of the mammalian genome.</title>
        <authorList>
            <person name="Carninci P."/>
            <person name="Kasukawa T."/>
            <person name="Katayama S."/>
            <person name="Gough J."/>
            <person name="Frith M.C."/>
            <person name="Maeda N."/>
            <person name="Oyama R."/>
            <person name="Ravasi T."/>
            <person name="Lenhard B."/>
            <person name="Wells C."/>
            <person name="Kodzius R."/>
            <person name="Shimokawa K."/>
            <person name="Bajic V.B."/>
            <person name="Brenner S.E."/>
            <person name="Batalov S."/>
            <person name="Forrest A.R."/>
            <person name="Zavolan M."/>
            <person name="Davis M.J."/>
            <person name="Wilming L.G."/>
            <person name="Aidinis V."/>
            <person name="Allen J.E."/>
            <person name="Ambesi-Impiombato A."/>
            <person name="Apweiler R."/>
            <person name="Aturaliya R.N."/>
            <person name="Bailey T.L."/>
            <person name="Bansal M."/>
            <person name="Baxter L."/>
            <person name="Beisel K.W."/>
            <person name="Bersano T."/>
            <person name="Bono H."/>
            <person name="Chalk A.M."/>
            <person name="Chiu K.P."/>
            <person name="Choudhary V."/>
            <person name="Christoffels A."/>
            <person name="Clutterbuck D.R."/>
            <person name="Crowe M.L."/>
            <person name="Dalla E."/>
            <person name="Dalrymple B.P."/>
            <person name="de Bono B."/>
            <person name="Della Gatta G."/>
            <person name="di Bernardo D."/>
            <person name="Down T."/>
            <person name="Engstrom P."/>
            <person name="Fagiolini M."/>
            <person name="Faulkner G."/>
            <person name="Fletcher C.F."/>
            <person name="Fukushima T."/>
            <person name="Furuno M."/>
            <person name="Futaki S."/>
            <person name="Gariboldi M."/>
            <person name="Georgii-Hemming P."/>
            <person name="Gingeras T.R."/>
            <person name="Gojobori T."/>
            <person name="Green R.E."/>
            <person name="Gustincich S."/>
            <person name="Harbers M."/>
            <person name="Hayashi Y."/>
            <person name="Hensch T.K."/>
            <person name="Hirokawa N."/>
            <person name="Hill D."/>
            <person name="Huminiecki L."/>
            <person name="Iacono M."/>
            <person name="Ikeo K."/>
            <person name="Iwama A."/>
            <person name="Ishikawa T."/>
            <person name="Jakt M."/>
            <person name="Kanapin A."/>
            <person name="Katoh M."/>
            <person name="Kawasawa Y."/>
            <person name="Kelso J."/>
            <person name="Kitamura H."/>
            <person name="Kitano H."/>
            <person name="Kollias G."/>
            <person name="Krishnan S.P."/>
            <person name="Kruger A."/>
            <person name="Kummerfeld S.K."/>
            <person name="Kurochkin I.V."/>
            <person name="Lareau L.F."/>
            <person name="Lazarevic D."/>
            <person name="Lipovich L."/>
            <person name="Liu J."/>
            <person name="Liuni S."/>
            <person name="McWilliam S."/>
            <person name="Madan Babu M."/>
            <person name="Madera M."/>
            <person name="Marchionni L."/>
            <person name="Matsuda H."/>
            <person name="Matsuzawa S."/>
            <person name="Miki H."/>
            <person name="Mignone F."/>
            <person name="Miyake S."/>
            <person name="Morris K."/>
            <person name="Mottagui-Tabar S."/>
            <person name="Mulder N."/>
            <person name="Nakano N."/>
            <person name="Nakauchi H."/>
            <person name="Ng P."/>
            <person name="Nilsson R."/>
            <person name="Nishiguchi S."/>
            <person name="Nishikawa S."/>
            <person name="Nori F."/>
            <person name="Ohara O."/>
            <person name="Okazaki Y."/>
            <person name="Orlando V."/>
            <person name="Pang K.C."/>
            <person name="Pavan W.J."/>
            <person name="Pavesi G."/>
            <person name="Pesole G."/>
            <person name="Petrovsky N."/>
            <person name="Piazza S."/>
            <person name="Reed J."/>
            <person name="Reid J.F."/>
            <person name="Ring B.Z."/>
            <person name="Ringwald M."/>
            <person name="Rost B."/>
            <person name="Ruan Y."/>
            <person name="Salzberg S.L."/>
            <person name="Sandelin A."/>
            <person name="Schneider C."/>
            <person name="Schoenbach C."/>
            <person name="Sekiguchi K."/>
            <person name="Semple C.A."/>
            <person name="Seno S."/>
            <person name="Sessa L."/>
            <person name="Sheng Y."/>
            <person name="Shibata Y."/>
            <person name="Shimada H."/>
            <person name="Shimada K."/>
            <person name="Silva D."/>
            <person name="Sinclair B."/>
            <person name="Sperling S."/>
            <person name="Stupka E."/>
            <person name="Sugiura K."/>
            <person name="Sultana R."/>
            <person name="Takenaka Y."/>
            <person name="Taki K."/>
            <person name="Tammoja K."/>
            <person name="Tan S.L."/>
            <person name="Tang S."/>
            <person name="Taylor M.S."/>
            <person name="Tegner J."/>
            <person name="Teichmann S.A."/>
            <person name="Ueda H.R."/>
            <person name="van Nimwegen E."/>
            <person name="Verardo R."/>
            <person name="Wei C.L."/>
            <person name="Yagi K."/>
            <person name="Yamanishi H."/>
            <person name="Zabarovsky E."/>
            <person name="Zhu S."/>
            <person name="Zimmer A."/>
            <person name="Hide W."/>
            <person name="Bult C."/>
            <person name="Grimmond S.M."/>
            <person name="Teasdale R.D."/>
            <person name="Liu E.T."/>
            <person name="Brusic V."/>
            <person name="Quackenbush J."/>
            <person name="Wahlestedt C."/>
            <person name="Mattick J.S."/>
            <person name="Hume D.A."/>
            <person name="Kai C."/>
            <person name="Sasaki D."/>
            <person name="Tomaru Y."/>
            <person name="Fukuda S."/>
            <person name="Kanamori-Katayama M."/>
            <person name="Suzuki M."/>
            <person name="Aoki J."/>
            <person name="Arakawa T."/>
            <person name="Iida J."/>
            <person name="Imamura K."/>
            <person name="Itoh M."/>
            <person name="Kato T."/>
            <person name="Kawaji H."/>
            <person name="Kawagashira N."/>
            <person name="Kawashima T."/>
            <person name="Kojima M."/>
            <person name="Kondo S."/>
            <person name="Konno H."/>
            <person name="Nakano K."/>
            <person name="Ninomiya N."/>
            <person name="Nishio T."/>
            <person name="Okada M."/>
            <person name="Plessy C."/>
            <person name="Shibata K."/>
            <person name="Shiraki T."/>
            <person name="Suzuki S."/>
            <person name="Tagami M."/>
            <person name="Waki K."/>
            <person name="Watahiki A."/>
            <person name="Okamura-Oho Y."/>
            <person name="Suzuki H."/>
            <person name="Kawai J."/>
            <person name="Hayashizaki Y."/>
        </authorList>
    </citation>
    <scope>NUCLEOTIDE SEQUENCE [LARGE SCALE MRNA]</scope>
    <source>
        <strain evidence="9">C57BL/6J</strain>
        <tissue evidence="9">Small intestine</tissue>
    </source>
</reference>
<reference key="3">
    <citation type="journal article" date="2004" name="Genome Res.">
        <title>The status, quality, and expansion of the NIH full-length cDNA project: the Mammalian Gene Collection (MGC).</title>
        <authorList>
            <consortium name="The MGC Project Team"/>
        </authorList>
    </citation>
    <scope>NUCLEOTIDE SEQUENCE [LARGE SCALE MRNA]</scope>
    <source>
        <strain evidence="7">FVB/N</strain>
        <tissue evidence="7">Colon</tissue>
    </source>
</reference>
<organism>
    <name type="scientific">Mus musculus</name>
    <name type="common">Mouse</name>
    <dbReference type="NCBI Taxonomy" id="10090"/>
    <lineage>
        <taxon>Eukaryota</taxon>
        <taxon>Metazoa</taxon>
        <taxon>Chordata</taxon>
        <taxon>Craniata</taxon>
        <taxon>Vertebrata</taxon>
        <taxon>Euteleostomi</taxon>
        <taxon>Mammalia</taxon>
        <taxon>Eutheria</taxon>
        <taxon>Euarchontoglires</taxon>
        <taxon>Glires</taxon>
        <taxon>Rodentia</taxon>
        <taxon>Myomorpha</taxon>
        <taxon>Muroidea</taxon>
        <taxon>Muridae</taxon>
        <taxon>Murinae</taxon>
        <taxon>Mus</taxon>
        <taxon>Mus</taxon>
    </lineage>
</organism>
<accession>Q9D816</accession>